<sequence>MTLLEIMRPANCVMAGAASLTGMLVSGALLQSLHTPVLVFSAVLLITGGGNAINDYFDREIDAVNRPDRPIPSGRISPRAALIWSVALFIAGCLIAGLINQSCLALALLNSFVLIIYAARLKGLPVAGNIAISYLTGTTFLFGGLAASPSSITAFLSILSALATLSREIVKDIEDLPGDLAHGAKTLPAFIGKRKSFVLASLVLIVAMLLSYLVPLGIDYQAAVSIANLAFLLSIKRMLCGDASGSQRWIKMGMGMALVAFLIGYHI</sequence>
<reference key="1">
    <citation type="submission" date="2006-10" db="EMBL/GenBank/DDBJ databases">
        <title>Complete sequence of Methanosaeta thermophila PT.</title>
        <authorList>
            <consortium name="US DOE Joint Genome Institute"/>
            <person name="Copeland A."/>
            <person name="Lucas S."/>
            <person name="Lapidus A."/>
            <person name="Barry K."/>
            <person name="Detter J.C."/>
            <person name="Glavina del Rio T."/>
            <person name="Hammon N."/>
            <person name="Israni S."/>
            <person name="Pitluck S."/>
            <person name="Chain P."/>
            <person name="Malfatti S."/>
            <person name="Shin M."/>
            <person name="Vergez L."/>
            <person name="Schmutz J."/>
            <person name="Larimer F."/>
            <person name="Land M."/>
            <person name="Hauser L."/>
            <person name="Kyrpides N."/>
            <person name="Kim E."/>
            <person name="Smith K.S."/>
            <person name="Ingram-Smith C."/>
            <person name="Richardson P."/>
        </authorList>
    </citation>
    <scope>NUCLEOTIDE SEQUENCE [LARGE SCALE GENOMIC DNA]</scope>
    <source>
        <strain>DSM 6194 / JCM 14653 / NBRC 101360 / PT</strain>
    </source>
</reference>
<evidence type="ECO:0000255" key="1">
    <source>
        <dbReference type="HAMAP-Rule" id="MF_01286"/>
    </source>
</evidence>
<proteinExistence type="inferred from homology"/>
<accession>A0B8A0</accession>
<name>DGGGP_METTP</name>
<dbReference type="EC" id="2.5.1.42" evidence="1"/>
<dbReference type="EMBL" id="CP000477">
    <property type="protein sequence ID" value="ABK14924.1"/>
    <property type="molecule type" value="Genomic_DNA"/>
</dbReference>
<dbReference type="RefSeq" id="WP_011696317.1">
    <property type="nucleotide sequence ID" value="NC_008553.1"/>
</dbReference>
<dbReference type="SMR" id="A0B8A0"/>
<dbReference type="STRING" id="349307.Mthe_1142"/>
<dbReference type="GeneID" id="4462892"/>
<dbReference type="KEGG" id="mtp:Mthe_1142"/>
<dbReference type="HOGENOM" id="CLU_073311_1_1_2"/>
<dbReference type="OrthoDB" id="11851at2157"/>
<dbReference type="UniPathway" id="UPA00940"/>
<dbReference type="Proteomes" id="UP000000674">
    <property type="component" value="Chromosome"/>
</dbReference>
<dbReference type="GO" id="GO:0005886">
    <property type="term" value="C:plasma membrane"/>
    <property type="evidence" value="ECO:0007669"/>
    <property type="project" value="UniProtKB-SubCell"/>
</dbReference>
<dbReference type="GO" id="GO:0047295">
    <property type="term" value="F:geranylgeranylglycerol-phosphate geranylgeranyltransferase activity"/>
    <property type="evidence" value="ECO:0007669"/>
    <property type="project" value="UniProtKB-UniRule"/>
</dbReference>
<dbReference type="GO" id="GO:0000287">
    <property type="term" value="F:magnesium ion binding"/>
    <property type="evidence" value="ECO:0007669"/>
    <property type="project" value="UniProtKB-UniRule"/>
</dbReference>
<dbReference type="GO" id="GO:0046474">
    <property type="term" value="P:glycerophospholipid biosynthetic process"/>
    <property type="evidence" value="ECO:0007669"/>
    <property type="project" value="UniProtKB-UniRule"/>
</dbReference>
<dbReference type="CDD" id="cd13961">
    <property type="entry name" value="PT_UbiA_DGGGPS"/>
    <property type="match status" value="1"/>
</dbReference>
<dbReference type="Gene3D" id="1.10.357.140">
    <property type="entry name" value="UbiA prenyltransferase"/>
    <property type="match status" value="1"/>
</dbReference>
<dbReference type="Gene3D" id="1.20.120.1780">
    <property type="entry name" value="UbiA prenyltransferase"/>
    <property type="match status" value="1"/>
</dbReference>
<dbReference type="HAMAP" id="MF_01286">
    <property type="entry name" value="DGGGP_synth"/>
    <property type="match status" value="1"/>
</dbReference>
<dbReference type="InterPro" id="IPR023547">
    <property type="entry name" value="DGGGP_synth"/>
</dbReference>
<dbReference type="InterPro" id="IPR050475">
    <property type="entry name" value="Prenyltransferase_related"/>
</dbReference>
<dbReference type="InterPro" id="IPR000537">
    <property type="entry name" value="UbiA_prenyltransferase"/>
</dbReference>
<dbReference type="InterPro" id="IPR044878">
    <property type="entry name" value="UbiA_sf"/>
</dbReference>
<dbReference type="NCBIfam" id="NF009521">
    <property type="entry name" value="PRK12882.1"/>
    <property type="match status" value="1"/>
</dbReference>
<dbReference type="PANTHER" id="PTHR42723">
    <property type="entry name" value="CHLOROPHYLL SYNTHASE"/>
    <property type="match status" value="1"/>
</dbReference>
<dbReference type="PANTHER" id="PTHR42723:SF1">
    <property type="entry name" value="CHLOROPHYLL SYNTHASE, CHLOROPLASTIC"/>
    <property type="match status" value="1"/>
</dbReference>
<dbReference type="Pfam" id="PF01040">
    <property type="entry name" value="UbiA"/>
    <property type="match status" value="1"/>
</dbReference>
<gene>
    <name type="ordered locus">Mthe_1142</name>
</gene>
<keyword id="KW-1003">Cell membrane</keyword>
<keyword id="KW-0444">Lipid biosynthesis</keyword>
<keyword id="KW-0443">Lipid metabolism</keyword>
<keyword id="KW-0460">Magnesium</keyword>
<keyword id="KW-0472">Membrane</keyword>
<keyword id="KW-0594">Phospholipid biosynthesis</keyword>
<keyword id="KW-1208">Phospholipid metabolism</keyword>
<keyword id="KW-1185">Reference proteome</keyword>
<keyword id="KW-0808">Transferase</keyword>
<keyword id="KW-0812">Transmembrane</keyword>
<keyword id="KW-1133">Transmembrane helix</keyword>
<organism>
    <name type="scientific">Methanothrix thermoacetophila (strain DSM 6194 / JCM 14653 / NBRC 101360 / PT)</name>
    <name type="common">Methanosaeta thermophila</name>
    <dbReference type="NCBI Taxonomy" id="349307"/>
    <lineage>
        <taxon>Archaea</taxon>
        <taxon>Methanobacteriati</taxon>
        <taxon>Methanobacteriota</taxon>
        <taxon>Stenosarchaea group</taxon>
        <taxon>Methanomicrobia</taxon>
        <taxon>Methanotrichales</taxon>
        <taxon>Methanotrichaceae</taxon>
        <taxon>Methanothrix</taxon>
    </lineage>
</organism>
<feature type="chain" id="PRO_5000148748" description="Digeranylgeranylglyceryl phosphate synthase">
    <location>
        <begin position="1"/>
        <end position="267"/>
    </location>
</feature>
<feature type="transmembrane region" description="Helical" evidence="1">
    <location>
        <begin position="10"/>
        <end position="30"/>
    </location>
</feature>
<feature type="transmembrane region" description="Helical" evidence="1">
    <location>
        <begin position="33"/>
        <end position="53"/>
    </location>
</feature>
<feature type="transmembrane region" description="Helical" evidence="1">
    <location>
        <begin position="80"/>
        <end position="100"/>
    </location>
</feature>
<feature type="transmembrane region" description="Helical" evidence="1">
    <location>
        <begin position="104"/>
        <end position="121"/>
    </location>
</feature>
<feature type="transmembrane region" description="Helical" evidence="1">
    <location>
        <begin position="139"/>
        <end position="159"/>
    </location>
</feature>
<feature type="transmembrane region" description="Helical" evidence="1">
    <location>
        <begin position="198"/>
        <end position="218"/>
    </location>
</feature>
<feature type="transmembrane region" description="Helical" evidence="1">
    <location>
        <begin position="247"/>
        <end position="267"/>
    </location>
</feature>
<protein>
    <recommendedName>
        <fullName evidence="1">Digeranylgeranylglyceryl phosphate synthase</fullName>
        <shortName evidence="1">DGGGP synthase</shortName>
        <shortName evidence="1">DGGGPS</shortName>
        <ecNumber evidence="1">2.5.1.42</ecNumber>
    </recommendedName>
    <alternativeName>
        <fullName evidence="1">(S)-2,3-di-O-geranylgeranylglyceryl phosphate synthase</fullName>
    </alternativeName>
    <alternativeName>
        <fullName evidence="1">Geranylgeranylglycerol-phosphate geranylgeranyltransferase</fullName>
    </alternativeName>
</protein>
<comment type="function">
    <text evidence="1">Prenyltransferase that catalyzes the transfer of the geranylgeranyl moiety of geranylgeranyl diphosphate (GGPP) to the C2 hydroxyl of (S)-3-O-geranylgeranylglyceryl phosphate (GGGP). This reaction is the second ether-bond-formation step in the biosynthesis of archaeal membrane lipids.</text>
</comment>
<comment type="catalytic activity">
    <reaction evidence="1">
        <text>sn-3-O-(geranylgeranyl)glycerol 1-phosphate + (2E,6E,10E)-geranylgeranyl diphosphate = 2,3-bis-O-(geranylgeranyl)-sn-glycerol 1-phosphate + diphosphate</text>
        <dbReference type="Rhea" id="RHEA:18109"/>
        <dbReference type="ChEBI" id="CHEBI:33019"/>
        <dbReference type="ChEBI" id="CHEBI:57677"/>
        <dbReference type="ChEBI" id="CHEBI:58756"/>
        <dbReference type="ChEBI" id="CHEBI:58837"/>
        <dbReference type="EC" id="2.5.1.42"/>
    </reaction>
</comment>
<comment type="cofactor">
    <cofactor evidence="1">
        <name>Mg(2+)</name>
        <dbReference type="ChEBI" id="CHEBI:18420"/>
    </cofactor>
</comment>
<comment type="pathway">
    <text evidence="1">Membrane lipid metabolism; glycerophospholipid metabolism.</text>
</comment>
<comment type="subcellular location">
    <subcellularLocation>
        <location evidence="1">Cell membrane</location>
        <topology evidence="1">Multi-pass membrane protein</topology>
    </subcellularLocation>
</comment>
<comment type="similarity">
    <text evidence="1">Belongs to the UbiA prenyltransferase family. DGGGP synthase subfamily.</text>
</comment>